<name>SCAF_PSHV1</name>
<protein>
    <recommendedName>
        <fullName evidence="2">Capsid scaffolding protein</fullName>
    </recommendedName>
    <alternativeName>
        <fullName>Capsid protein P40</fullName>
    </alternativeName>
    <alternativeName>
        <fullName evidence="2">Protease precursor</fullName>
        <shortName evidence="2">pPR</shortName>
    </alternativeName>
    <component>
        <recommendedName>
            <fullName evidence="2">Assemblin</fullName>
            <ecNumber evidence="2">3.4.21.97</ecNumber>
        </recommendedName>
        <alternativeName>
            <fullName evidence="2">Protease</fullName>
            <shortName evidence="2">Pr</shortName>
        </alternativeName>
    </component>
    <component>
        <recommendedName>
            <fullName evidence="2">Assembly protein</fullName>
            <shortName evidence="2">AP</shortName>
        </recommendedName>
        <alternativeName>
            <fullName evidence="2">Capsid assembly protein</fullName>
        </alternativeName>
    </component>
</protein>
<organism>
    <name type="scientific">Psittacid herpesvirus 1 (isolate Amazon parrot/-/97-0001/1997)</name>
    <name type="common">PsHV-1</name>
    <name type="synonym">Pacheco's disease virus</name>
    <dbReference type="NCBI Taxonomy" id="670426"/>
    <lineage>
        <taxon>Viruses</taxon>
        <taxon>Duplodnaviria</taxon>
        <taxon>Heunggongvirae</taxon>
        <taxon>Peploviricota</taxon>
        <taxon>Herviviricetes</taxon>
        <taxon>Herpesvirales</taxon>
        <taxon>Orthoherpesviridae</taxon>
        <taxon>Alphaherpesvirinae</taxon>
        <taxon>Iltovirus</taxon>
        <taxon>Iltovirus psittacidalpha1</taxon>
        <taxon>Psittacid alphaherpesvirus 1</taxon>
    </lineage>
</organism>
<dbReference type="EC" id="3.4.21.97" evidence="2"/>
<dbReference type="EMBL" id="AY372243">
    <property type="protein sequence ID" value="AAQ73704.1"/>
    <property type="status" value="ALT_SEQ"/>
    <property type="molecule type" value="Genomic_DNA"/>
</dbReference>
<dbReference type="EMBL" id="AY372243">
    <property type="protein sequence ID" value="AAQ73705.1"/>
    <property type="status" value="ALT_SEQ"/>
    <property type="molecule type" value="Genomic_DNA"/>
</dbReference>
<dbReference type="RefSeq" id="NP_944398.1">
    <property type="nucleotide sequence ID" value="NC_005264.1"/>
</dbReference>
<dbReference type="SMR" id="Q6UDK6"/>
<dbReference type="MEROPS" id="S21.001"/>
<dbReference type="GeneID" id="2656956"/>
<dbReference type="KEGG" id="vg:2656956"/>
<dbReference type="KEGG" id="vg:2656997"/>
<dbReference type="Proteomes" id="UP000006840">
    <property type="component" value="Segment"/>
</dbReference>
<dbReference type="GO" id="GO:0030430">
    <property type="term" value="C:host cell cytoplasm"/>
    <property type="evidence" value="ECO:0007669"/>
    <property type="project" value="UniProtKB-SubCell"/>
</dbReference>
<dbReference type="GO" id="GO:0042025">
    <property type="term" value="C:host cell nucleus"/>
    <property type="evidence" value="ECO:0007669"/>
    <property type="project" value="UniProtKB-SubCell"/>
</dbReference>
<dbReference type="GO" id="GO:0042802">
    <property type="term" value="F:identical protein binding"/>
    <property type="evidence" value="ECO:0007669"/>
    <property type="project" value="UniProtKB-UniRule"/>
</dbReference>
<dbReference type="GO" id="GO:0004252">
    <property type="term" value="F:serine-type endopeptidase activity"/>
    <property type="evidence" value="ECO:0007669"/>
    <property type="project" value="UniProtKB-UniRule"/>
</dbReference>
<dbReference type="GO" id="GO:0039708">
    <property type="term" value="P:nuclear capsid assembly"/>
    <property type="evidence" value="ECO:0007669"/>
    <property type="project" value="UniProtKB-ARBA"/>
</dbReference>
<dbReference type="GO" id="GO:0006508">
    <property type="term" value="P:proteolysis"/>
    <property type="evidence" value="ECO:0007669"/>
    <property type="project" value="UniProtKB-KW"/>
</dbReference>
<dbReference type="GO" id="GO:0019076">
    <property type="term" value="P:viral release from host cell"/>
    <property type="evidence" value="ECO:0007669"/>
    <property type="project" value="UniProtKB-UniRule"/>
</dbReference>
<dbReference type="Gene3D" id="3.20.16.10">
    <property type="entry name" value="Herpesvirus/Caudovirus protease domain"/>
    <property type="match status" value="1"/>
</dbReference>
<dbReference type="HAMAP" id="MF_04008">
    <property type="entry name" value="HSV_SCAF"/>
    <property type="match status" value="1"/>
</dbReference>
<dbReference type="InterPro" id="IPR035443">
    <property type="entry name" value="Herpes_virus_sf"/>
</dbReference>
<dbReference type="InterPro" id="IPR001847">
    <property type="entry name" value="Peptidase_S21"/>
</dbReference>
<dbReference type="Pfam" id="PF00716">
    <property type="entry name" value="Peptidase_S21"/>
    <property type="match status" value="2"/>
</dbReference>
<dbReference type="PRINTS" id="PR00236">
    <property type="entry name" value="HSVCAPSIDP40"/>
</dbReference>
<dbReference type="SUPFAM" id="SSF50789">
    <property type="entry name" value="Herpes virus serine proteinase, assemblin"/>
    <property type="match status" value="1"/>
</dbReference>
<gene>
    <name type="primary">UL26</name>
</gene>
<comment type="function">
    <molecule>Capsid scaffolding protein</molecule>
    <text evidence="2">Acts as a scaffold protein by binding major capsid protein in the cytoplasm, inducing the nuclear localization of both proteins. Multimerizes in the nucleus such as major capsid protein forms the icosahedral T=16 capsid. Autocatalytic cleavage releases the assembly protein, and subsequently abolishes interaction with major capsid protein. Cleavages products are evicted from the capsid before or during DNA packaging.</text>
</comment>
<comment type="function">
    <molecule>Assemblin</molecule>
    <text evidence="2">Protease that plays an essential role in virion assembly within the nucleus. Catalyzes the cleavage of the assembly protein after formation of the spherical procapsid. By that cleavage, the capsid matures and gains its icosahedral shape. The cleavage sites seem to include -Ala-Ser-, -Ala-Ala-, as well as Ala-Thr bonds. Assemblin and cleavages products are evicted from the capsid before or during DNA packaging.</text>
</comment>
<comment type="function">
    <molecule>Assembly protein</molecule>
    <text evidence="2">Plays a major role in capsid assembly. Acts as a scaffold protein by binding major capsid protein. Multimerizes in the nucleus such as major capsid protein forms the icosahedral T=16 capsid. Cleaved by assemblin after capsid completion. The cleavages products are evicted from the capsid before or during DNA packaging.</text>
</comment>
<comment type="catalytic activity">
    <molecule>Assemblin</molecule>
    <reaction evidence="2">
        <text>Cleaves -Ala-|-Ser- and -Ala-|-Ala- bonds in the scaffold protein.</text>
        <dbReference type="EC" id="3.4.21.97"/>
    </reaction>
</comment>
<comment type="subunit">
    <molecule>Capsid scaffolding protein</molecule>
    <text evidence="2">Homomultimer. Interacts with major capsid protein.</text>
</comment>
<comment type="subunit">
    <molecule>Assemblin</molecule>
    <text evidence="2">Exists in a monomer-dimer equilibrium with the dimer being the active species.</text>
</comment>
<comment type="subunit">
    <molecule>Assembly protein</molecule>
    <text evidence="2">Homomultimer. Interacts with major capsid protein.</text>
</comment>
<comment type="subcellular location">
    <molecule>Capsid scaffolding protein</molecule>
    <subcellularLocation>
        <location evidence="2">Host cytoplasm</location>
    </subcellularLocation>
</comment>
<comment type="subcellular location">
    <molecule>Assemblin</molecule>
    <subcellularLocation>
        <location evidence="2">Host nucleus</location>
    </subcellularLocation>
</comment>
<comment type="subcellular location">
    <molecule>Assembly protein</molecule>
    <subcellularLocation>
        <location evidence="2">Host nucleus</location>
    </subcellularLocation>
</comment>
<comment type="alternative products">
    <event type="alternative promoter"/>
    <isoform>
        <id>Q6UDK6-1</id>
        <name>Capsid scaffolding protein</name>
        <name>pPR</name>
        <sequence type="displayed"/>
    </isoform>
    <isoform>
        <id>Q6UDK6-2</id>
        <name>pAP</name>
        <name>Assembly protein</name>
        <sequence type="described" ref="VSP_040857"/>
    </isoform>
</comment>
<comment type="domain">
    <text evidence="2">Region of interaction between pPR and pAP is called Amino conserved domain (ACD). The region of interaction with major capsid protein is called carboxyl conserved domain (CCD).</text>
</comment>
<comment type="PTM">
    <molecule>Capsid scaffolding protein</molecule>
    <text evidence="2">Capsid scaffolding protein is cleaved by assemblin after formation of the spherical procapsid. As a result, the capsid obtains its mature, icosahedral shape. Cleavages occur at two or more sites: release (R-site) and maturation (M-site).</text>
</comment>
<comment type="similarity">
    <text evidence="2">Belongs to the herpesviridae capsid scaffolding protein family.</text>
</comment>
<comment type="caution">
    <text evidence="4">The sequence corresponding to the ORFs UL26 and UL26.5 have been constructed manually and may not be correct.</text>
</comment>
<comment type="sequence caution" evidence="4">
    <conflict type="erroneous gene model prediction">
        <sequence resource="EMBL-CDS" id="AAQ73704"/>
    </conflict>
</comment>
<comment type="sequence caution" evidence="4">
    <conflict type="erroneous gene model prediction">
        <sequence resource="EMBL-CDS" id="AAQ73705"/>
    </conflict>
</comment>
<keyword id="KW-0877">Alternative promoter usage</keyword>
<keyword id="KW-1035">Host cytoplasm</keyword>
<keyword id="KW-1048">Host nucleus</keyword>
<keyword id="KW-0378">Hydrolase</keyword>
<keyword id="KW-0597">Phosphoprotein</keyword>
<keyword id="KW-0645">Protease</keyword>
<keyword id="KW-1185">Reference proteome</keyword>
<keyword id="KW-0720">Serine protease</keyword>
<keyword id="KW-0118">Viral capsid assembly</keyword>
<keyword id="KW-1188">Viral release from host cell</keyword>
<feature type="chain" id="PRO_0000406804" description="Capsid scaffolding protein">
    <location>
        <begin position="1"/>
        <end position="726"/>
    </location>
</feature>
<feature type="chain" id="PRO_0000406805" description="Assemblin" evidence="2">
    <location>
        <begin position="1"/>
        <end position="257"/>
    </location>
</feature>
<feature type="chain" id="PRO_0000406806" description="Assembly protein" evidence="2">
    <location>
        <begin position="258"/>
        <end position="726"/>
    </location>
</feature>
<feature type="region of interest" description="Disordered" evidence="3">
    <location>
        <begin position="321"/>
        <end position="362"/>
    </location>
</feature>
<feature type="region of interest" description="Interaction with pAP" evidence="2">
    <location>
        <begin position="365"/>
        <end position="384"/>
    </location>
</feature>
<feature type="region of interest" description="Disordered" evidence="3">
    <location>
        <begin position="385"/>
        <end position="427"/>
    </location>
</feature>
<feature type="region of interest" description="Disordered" evidence="3">
    <location>
        <begin position="472"/>
        <end position="492"/>
    </location>
</feature>
<feature type="region of interest" description="Disordered" evidence="3">
    <location>
        <begin position="568"/>
        <end position="644"/>
    </location>
</feature>
<feature type="region of interest" description="Disordered" evidence="3">
    <location>
        <begin position="668"/>
        <end position="726"/>
    </location>
</feature>
<feature type="region of interest" description="Interaction with major capsid protein" evidence="2">
    <location>
        <begin position="706"/>
        <end position="726"/>
    </location>
</feature>
<feature type="compositionally biased region" description="Pro residues" evidence="3">
    <location>
        <begin position="352"/>
        <end position="361"/>
    </location>
</feature>
<feature type="compositionally biased region" description="Polar residues" evidence="3">
    <location>
        <begin position="402"/>
        <end position="418"/>
    </location>
</feature>
<feature type="compositionally biased region" description="Basic and acidic residues" evidence="3">
    <location>
        <begin position="702"/>
        <end position="720"/>
    </location>
</feature>
<feature type="active site" description="Charge relay system" evidence="2">
    <location>
        <position position="53"/>
    </location>
</feature>
<feature type="active site" description="Charge relay system" evidence="2">
    <location>
        <position position="140"/>
    </location>
</feature>
<feature type="active site" description="Charge relay system" evidence="2">
    <location>
        <position position="159"/>
    </location>
</feature>
<feature type="site" description="Cleavage; by assemblin; Release site" evidence="2">
    <location>
        <begin position="257"/>
        <end position="258"/>
    </location>
</feature>
<feature type="site" description="Cleavage; by assemblin; Maturation site" evidence="1">
    <location>
        <begin position="697"/>
        <end position="698"/>
    </location>
</feature>
<feature type="splice variant" id="VSP_040857" description="In isoform pAP." evidence="4">
    <location>
        <begin position="1"/>
        <end position="341"/>
    </location>
</feature>
<feature type="unsure residue">
    <location>
        <begin position="471"/>
        <end position="497"/>
    </location>
</feature>
<organismHost>
    <name type="scientific">Amazona oratrix</name>
    <name type="common">yellow-headed parrot</name>
    <dbReference type="NCBI Taxonomy" id="152276"/>
</organismHost>
<accession>Q6UDK6</accession>
<accession>Q6UDK5</accession>
<proteinExistence type="inferred from homology"/>
<reference key="1">
    <citation type="journal article" date="2006" name="J. Virol.">
        <title>Psittacid herpesvirus 1 and infectious laryngotracheitis virus: Comparative genome sequence analysis of two avian alphaherpesviruses.</title>
        <authorList>
            <person name="Thureen D.R."/>
            <person name="Keeler C.L. Jr."/>
        </authorList>
    </citation>
    <scope>NUCLEOTIDE SEQUENCE [LARGE SCALE GENOMIC DNA]</scope>
</reference>
<sequence length="726" mass="77135">MVVAEQLEDVFVGGYLVIYASQDGAGEEYRLPKEVVARALPVEPGRVPVNINHDASCRVGSVISIVDVEKGLFFLGVVSGSLALAMFKYVARDLFRADDGDSPGGGAESETRSDEALPANTLSEREKFLYLLSNVLPSLSLSSARLADGYSPADDFFAHVALCELGKRDGTIAIYGSSPPEVLDAFSGLDDAAKRELARSAEEWTTSSRREEPVDEAMVSECLLRKFMNNAFLMDRGEYLRARRHLADVRRPKYLQAAETTCLSSANPRSSGKAAFSCEARGLDEAGAGAIGRAPESGMAASADQHAQDGIKIRLERSRSQIGPGAMSSVSQPAAAPYSGAMADSAAQVPSAQPPRIPCPPTGQTEMIYVPLGTYNDLVVSAAQARRGEDRRQQLSAPPPQHAQQIVQRETGINSSSPALAPAGRGSYASASHIMHQPAFQTQQPCWPQQQQYVQAPCGGHGIGYYGQAVSRRGGSSGDGAPTTRSTGAPGAGGLSMFGMQHAGPQTHFTAPLHGLPTGFPAHGSFLHAPGYLGAMPPIQVYAPQPQQHPPSLDTRIEALLAALEKERASEQGAAEGPQQSLVAGQNKKKALLKRSMEHQREEEEDDESAPEAPYFPGEAAASCKRQAKRQRAAAEGEEQVAPSFSDLIQGLAALHKDVAEMKASVAGIGAPQASQPTPVAQPEHEEPKQAPATVDASSSKKLKDSRRAAEKRRAADEFARIMSTE</sequence>
<evidence type="ECO:0000250" key="1">
    <source>
        <dbReference type="UniProtKB" id="P16753"/>
    </source>
</evidence>
<evidence type="ECO:0000255" key="2">
    <source>
        <dbReference type="HAMAP-Rule" id="MF_04008"/>
    </source>
</evidence>
<evidence type="ECO:0000256" key="3">
    <source>
        <dbReference type="SAM" id="MobiDB-lite"/>
    </source>
</evidence>
<evidence type="ECO:0000305" key="4"/>